<dbReference type="EC" id="2.7.7.23" evidence="1"/>
<dbReference type="EC" id="2.3.1.157" evidence="1"/>
<dbReference type="EMBL" id="CP000058">
    <property type="protein sequence ID" value="AAZ35834.1"/>
    <property type="molecule type" value="Genomic_DNA"/>
</dbReference>
<dbReference type="RefSeq" id="WP_011169938.1">
    <property type="nucleotide sequence ID" value="NC_005773.3"/>
</dbReference>
<dbReference type="SMR" id="Q48BG7"/>
<dbReference type="KEGG" id="psp:PSPPH_5205"/>
<dbReference type="eggNOG" id="COG1207">
    <property type="taxonomic scope" value="Bacteria"/>
</dbReference>
<dbReference type="HOGENOM" id="CLU_029499_15_2_6"/>
<dbReference type="UniPathway" id="UPA00113">
    <property type="reaction ID" value="UER00532"/>
</dbReference>
<dbReference type="UniPathway" id="UPA00113">
    <property type="reaction ID" value="UER00533"/>
</dbReference>
<dbReference type="UniPathway" id="UPA00973"/>
<dbReference type="Proteomes" id="UP000000551">
    <property type="component" value="Chromosome"/>
</dbReference>
<dbReference type="GO" id="GO:0005737">
    <property type="term" value="C:cytoplasm"/>
    <property type="evidence" value="ECO:0007669"/>
    <property type="project" value="UniProtKB-SubCell"/>
</dbReference>
<dbReference type="GO" id="GO:0016020">
    <property type="term" value="C:membrane"/>
    <property type="evidence" value="ECO:0007669"/>
    <property type="project" value="GOC"/>
</dbReference>
<dbReference type="GO" id="GO:0019134">
    <property type="term" value="F:glucosamine-1-phosphate N-acetyltransferase activity"/>
    <property type="evidence" value="ECO:0007669"/>
    <property type="project" value="UniProtKB-UniRule"/>
</dbReference>
<dbReference type="GO" id="GO:0000287">
    <property type="term" value="F:magnesium ion binding"/>
    <property type="evidence" value="ECO:0007669"/>
    <property type="project" value="UniProtKB-UniRule"/>
</dbReference>
<dbReference type="GO" id="GO:0003977">
    <property type="term" value="F:UDP-N-acetylglucosamine diphosphorylase activity"/>
    <property type="evidence" value="ECO:0007669"/>
    <property type="project" value="UniProtKB-UniRule"/>
</dbReference>
<dbReference type="GO" id="GO:0000902">
    <property type="term" value="P:cell morphogenesis"/>
    <property type="evidence" value="ECO:0007669"/>
    <property type="project" value="UniProtKB-UniRule"/>
</dbReference>
<dbReference type="GO" id="GO:0071555">
    <property type="term" value="P:cell wall organization"/>
    <property type="evidence" value="ECO:0007669"/>
    <property type="project" value="UniProtKB-KW"/>
</dbReference>
<dbReference type="GO" id="GO:0009245">
    <property type="term" value="P:lipid A biosynthetic process"/>
    <property type="evidence" value="ECO:0007669"/>
    <property type="project" value="UniProtKB-UniRule"/>
</dbReference>
<dbReference type="GO" id="GO:0009252">
    <property type="term" value="P:peptidoglycan biosynthetic process"/>
    <property type="evidence" value="ECO:0007669"/>
    <property type="project" value="UniProtKB-UniRule"/>
</dbReference>
<dbReference type="GO" id="GO:0008360">
    <property type="term" value="P:regulation of cell shape"/>
    <property type="evidence" value="ECO:0007669"/>
    <property type="project" value="UniProtKB-KW"/>
</dbReference>
<dbReference type="GO" id="GO:0006048">
    <property type="term" value="P:UDP-N-acetylglucosamine biosynthetic process"/>
    <property type="evidence" value="ECO:0007669"/>
    <property type="project" value="UniProtKB-UniPathway"/>
</dbReference>
<dbReference type="CDD" id="cd02540">
    <property type="entry name" value="GT2_GlmU_N_bac"/>
    <property type="match status" value="1"/>
</dbReference>
<dbReference type="CDD" id="cd03353">
    <property type="entry name" value="LbH_GlmU_C"/>
    <property type="match status" value="1"/>
</dbReference>
<dbReference type="Gene3D" id="2.160.10.10">
    <property type="entry name" value="Hexapeptide repeat proteins"/>
    <property type="match status" value="1"/>
</dbReference>
<dbReference type="Gene3D" id="3.90.550.10">
    <property type="entry name" value="Spore Coat Polysaccharide Biosynthesis Protein SpsA, Chain A"/>
    <property type="match status" value="1"/>
</dbReference>
<dbReference type="HAMAP" id="MF_01631">
    <property type="entry name" value="GlmU"/>
    <property type="match status" value="1"/>
</dbReference>
<dbReference type="InterPro" id="IPR005882">
    <property type="entry name" value="Bifunctional_GlmU"/>
</dbReference>
<dbReference type="InterPro" id="IPR050065">
    <property type="entry name" value="GlmU-like"/>
</dbReference>
<dbReference type="InterPro" id="IPR038009">
    <property type="entry name" value="GlmU_C_LbH"/>
</dbReference>
<dbReference type="InterPro" id="IPR001451">
    <property type="entry name" value="Hexapep"/>
</dbReference>
<dbReference type="InterPro" id="IPR025877">
    <property type="entry name" value="MobA-like_NTP_Trfase"/>
</dbReference>
<dbReference type="InterPro" id="IPR029044">
    <property type="entry name" value="Nucleotide-diphossugar_trans"/>
</dbReference>
<dbReference type="InterPro" id="IPR011004">
    <property type="entry name" value="Trimer_LpxA-like_sf"/>
</dbReference>
<dbReference type="NCBIfam" id="TIGR01173">
    <property type="entry name" value="glmU"/>
    <property type="match status" value="1"/>
</dbReference>
<dbReference type="PANTHER" id="PTHR43584:SF3">
    <property type="entry name" value="BIFUNCTIONAL PROTEIN GLMU"/>
    <property type="match status" value="1"/>
</dbReference>
<dbReference type="PANTHER" id="PTHR43584">
    <property type="entry name" value="NUCLEOTIDYL TRANSFERASE"/>
    <property type="match status" value="1"/>
</dbReference>
<dbReference type="Pfam" id="PF00132">
    <property type="entry name" value="Hexapep"/>
    <property type="match status" value="1"/>
</dbReference>
<dbReference type="Pfam" id="PF12804">
    <property type="entry name" value="NTP_transf_3"/>
    <property type="match status" value="1"/>
</dbReference>
<dbReference type="SUPFAM" id="SSF53448">
    <property type="entry name" value="Nucleotide-diphospho-sugar transferases"/>
    <property type="match status" value="1"/>
</dbReference>
<dbReference type="SUPFAM" id="SSF51161">
    <property type="entry name" value="Trimeric LpxA-like enzymes"/>
    <property type="match status" value="1"/>
</dbReference>
<organism>
    <name type="scientific">Pseudomonas savastanoi pv. phaseolicola (strain 1448A / Race 6)</name>
    <name type="common">Pseudomonas syringae pv. phaseolicola (strain 1448A / Race 6)</name>
    <dbReference type="NCBI Taxonomy" id="264730"/>
    <lineage>
        <taxon>Bacteria</taxon>
        <taxon>Pseudomonadati</taxon>
        <taxon>Pseudomonadota</taxon>
        <taxon>Gammaproteobacteria</taxon>
        <taxon>Pseudomonadales</taxon>
        <taxon>Pseudomonadaceae</taxon>
        <taxon>Pseudomonas</taxon>
    </lineage>
</organism>
<name>GLMU_PSE14</name>
<feature type="chain" id="PRO_0000233825" description="Bifunctional protein GlmU">
    <location>
        <begin position="1"/>
        <end position="455"/>
    </location>
</feature>
<feature type="region of interest" description="Pyrophosphorylase" evidence="1">
    <location>
        <begin position="1"/>
        <end position="226"/>
    </location>
</feature>
<feature type="region of interest" description="Linker" evidence="1">
    <location>
        <begin position="227"/>
        <end position="247"/>
    </location>
</feature>
<feature type="region of interest" description="N-acetyltransferase" evidence="1">
    <location>
        <begin position="248"/>
        <end position="455"/>
    </location>
</feature>
<feature type="active site" description="Proton acceptor" evidence="1">
    <location>
        <position position="360"/>
    </location>
</feature>
<feature type="binding site" evidence="1">
    <location>
        <begin position="8"/>
        <end position="11"/>
    </location>
    <ligand>
        <name>UDP-N-acetyl-alpha-D-glucosamine</name>
        <dbReference type="ChEBI" id="CHEBI:57705"/>
    </ligand>
</feature>
<feature type="binding site" evidence="1">
    <location>
        <position position="22"/>
    </location>
    <ligand>
        <name>UDP-N-acetyl-alpha-D-glucosamine</name>
        <dbReference type="ChEBI" id="CHEBI:57705"/>
    </ligand>
</feature>
<feature type="binding site" evidence="1">
    <location>
        <position position="73"/>
    </location>
    <ligand>
        <name>UDP-N-acetyl-alpha-D-glucosamine</name>
        <dbReference type="ChEBI" id="CHEBI:57705"/>
    </ligand>
</feature>
<feature type="binding site" evidence="1">
    <location>
        <begin position="78"/>
        <end position="79"/>
    </location>
    <ligand>
        <name>UDP-N-acetyl-alpha-D-glucosamine</name>
        <dbReference type="ChEBI" id="CHEBI:57705"/>
    </ligand>
</feature>
<feature type="binding site" evidence="1">
    <location>
        <begin position="99"/>
        <end position="101"/>
    </location>
    <ligand>
        <name>UDP-N-acetyl-alpha-D-glucosamine</name>
        <dbReference type="ChEBI" id="CHEBI:57705"/>
    </ligand>
</feature>
<feature type="binding site" evidence="1">
    <location>
        <position position="101"/>
    </location>
    <ligand>
        <name>Mg(2+)</name>
        <dbReference type="ChEBI" id="CHEBI:18420"/>
    </ligand>
</feature>
<feature type="binding site" evidence="1">
    <location>
        <position position="136"/>
    </location>
    <ligand>
        <name>UDP-N-acetyl-alpha-D-glucosamine</name>
        <dbReference type="ChEBI" id="CHEBI:57705"/>
    </ligand>
</feature>
<feature type="binding site" evidence="1">
    <location>
        <position position="151"/>
    </location>
    <ligand>
        <name>UDP-N-acetyl-alpha-D-glucosamine</name>
        <dbReference type="ChEBI" id="CHEBI:57705"/>
    </ligand>
</feature>
<feature type="binding site" evidence="1">
    <location>
        <position position="166"/>
    </location>
    <ligand>
        <name>UDP-N-acetyl-alpha-D-glucosamine</name>
        <dbReference type="ChEBI" id="CHEBI:57705"/>
    </ligand>
</feature>
<feature type="binding site" evidence="1">
    <location>
        <position position="224"/>
    </location>
    <ligand>
        <name>Mg(2+)</name>
        <dbReference type="ChEBI" id="CHEBI:18420"/>
    </ligand>
</feature>
<feature type="binding site" evidence="1">
    <location>
        <position position="224"/>
    </location>
    <ligand>
        <name>UDP-N-acetyl-alpha-D-glucosamine</name>
        <dbReference type="ChEBI" id="CHEBI:57705"/>
    </ligand>
</feature>
<feature type="binding site" evidence="1">
    <location>
        <position position="330"/>
    </location>
    <ligand>
        <name>UDP-N-acetyl-alpha-D-glucosamine</name>
        <dbReference type="ChEBI" id="CHEBI:57705"/>
    </ligand>
</feature>
<feature type="binding site" evidence="1">
    <location>
        <position position="348"/>
    </location>
    <ligand>
        <name>UDP-N-acetyl-alpha-D-glucosamine</name>
        <dbReference type="ChEBI" id="CHEBI:57705"/>
    </ligand>
</feature>
<feature type="binding site" evidence="1">
    <location>
        <position position="363"/>
    </location>
    <ligand>
        <name>UDP-N-acetyl-alpha-D-glucosamine</name>
        <dbReference type="ChEBI" id="CHEBI:57705"/>
    </ligand>
</feature>
<feature type="binding site" evidence="1">
    <location>
        <position position="374"/>
    </location>
    <ligand>
        <name>UDP-N-acetyl-alpha-D-glucosamine</name>
        <dbReference type="ChEBI" id="CHEBI:57705"/>
    </ligand>
</feature>
<feature type="binding site" evidence="1">
    <location>
        <position position="377"/>
    </location>
    <ligand>
        <name>acetyl-CoA</name>
        <dbReference type="ChEBI" id="CHEBI:57288"/>
    </ligand>
</feature>
<feature type="binding site" evidence="1">
    <location>
        <begin position="383"/>
        <end position="384"/>
    </location>
    <ligand>
        <name>acetyl-CoA</name>
        <dbReference type="ChEBI" id="CHEBI:57288"/>
    </ligand>
</feature>
<feature type="binding site" evidence="1">
    <location>
        <position position="402"/>
    </location>
    <ligand>
        <name>acetyl-CoA</name>
        <dbReference type="ChEBI" id="CHEBI:57288"/>
    </ligand>
</feature>
<feature type="binding site" evidence="1">
    <location>
        <position position="420"/>
    </location>
    <ligand>
        <name>acetyl-CoA</name>
        <dbReference type="ChEBI" id="CHEBI:57288"/>
    </ligand>
</feature>
<feature type="binding site" evidence="1">
    <location>
        <position position="437"/>
    </location>
    <ligand>
        <name>acetyl-CoA</name>
        <dbReference type="ChEBI" id="CHEBI:57288"/>
    </ligand>
</feature>
<comment type="function">
    <text evidence="1">Catalyzes the last two sequential reactions in the de novo biosynthetic pathway for UDP-N-acetylglucosamine (UDP-GlcNAc). The C-terminal domain catalyzes the transfer of acetyl group from acetyl coenzyme A to glucosamine-1-phosphate (GlcN-1-P) to produce N-acetylglucosamine-1-phosphate (GlcNAc-1-P), which is converted into UDP-GlcNAc by the transfer of uridine 5-monophosphate (from uridine 5-triphosphate), a reaction catalyzed by the N-terminal domain.</text>
</comment>
<comment type="catalytic activity">
    <reaction evidence="1">
        <text>alpha-D-glucosamine 1-phosphate + acetyl-CoA = N-acetyl-alpha-D-glucosamine 1-phosphate + CoA + H(+)</text>
        <dbReference type="Rhea" id="RHEA:13725"/>
        <dbReference type="ChEBI" id="CHEBI:15378"/>
        <dbReference type="ChEBI" id="CHEBI:57287"/>
        <dbReference type="ChEBI" id="CHEBI:57288"/>
        <dbReference type="ChEBI" id="CHEBI:57776"/>
        <dbReference type="ChEBI" id="CHEBI:58516"/>
        <dbReference type="EC" id="2.3.1.157"/>
    </reaction>
</comment>
<comment type="catalytic activity">
    <reaction evidence="1">
        <text>N-acetyl-alpha-D-glucosamine 1-phosphate + UTP + H(+) = UDP-N-acetyl-alpha-D-glucosamine + diphosphate</text>
        <dbReference type="Rhea" id="RHEA:13509"/>
        <dbReference type="ChEBI" id="CHEBI:15378"/>
        <dbReference type="ChEBI" id="CHEBI:33019"/>
        <dbReference type="ChEBI" id="CHEBI:46398"/>
        <dbReference type="ChEBI" id="CHEBI:57705"/>
        <dbReference type="ChEBI" id="CHEBI:57776"/>
        <dbReference type="EC" id="2.7.7.23"/>
    </reaction>
</comment>
<comment type="cofactor">
    <cofactor evidence="1">
        <name>Mg(2+)</name>
        <dbReference type="ChEBI" id="CHEBI:18420"/>
    </cofactor>
    <text evidence="1">Binds 1 Mg(2+) ion per subunit.</text>
</comment>
<comment type="pathway">
    <text evidence="1">Nucleotide-sugar biosynthesis; UDP-N-acetyl-alpha-D-glucosamine biosynthesis; N-acetyl-alpha-D-glucosamine 1-phosphate from alpha-D-glucosamine 6-phosphate (route II): step 2/2.</text>
</comment>
<comment type="pathway">
    <text evidence="1">Nucleotide-sugar biosynthesis; UDP-N-acetyl-alpha-D-glucosamine biosynthesis; UDP-N-acetyl-alpha-D-glucosamine from N-acetyl-alpha-D-glucosamine 1-phosphate: step 1/1.</text>
</comment>
<comment type="pathway">
    <text evidence="1">Bacterial outer membrane biogenesis; LPS lipid A biosynthesis.</text>
</comment>
<comment type="subunit">
    <text evidence="1">Homotrimer.</text>
</comment>
<comment type="subcellular location">
    <subcellularLocation>
        <location evidence="1">Cytoplasm</location>
    </subcellularLocation>
</comment>
<comment type="similarity">
    <text evidence="1">In the N-terminal section; belongs to the N-acetylglucosamine-1-phosphate uridyltransferase family.</text>
</comment>
<comment type="similarity">
    <text evidence="1">In the C-terminal section; belongs to the transferase hexapeptide repeat family.</text>
</comment>
<sequence length="455" mass="48540">MSLDIVILAAGQGTRMRSALPKVLHPVAGNSMLGHVIHSARQLSPNGIHVVIGHGADAVREQLAADDLNFVMQDKQLGTGHAVAQALPALTAETVLILYGDVPLIEVETLTRLLKLVNPQQLGLLTVTLDDPTGYGRIVRDQQNRVCAIVEHKDANDVQKAITEGNTGILAVPAKRLADWLGRLSNNNAQGEYYLTDVIAMAVNDGLIVATEQPYGAMEVQGANDRKQLSELERHYQLREARRLMAGGVTLRDPARFDVRGEVSVGRDVLIDINVILEGKVVIEDNVVIGPNCVIKDSTLRKGVIVKANSHIEGAILGEGSDAGPFARLRPGSVLGAKAHVGNFVELKNANLGEGAKVGHLTYLGDAEVGARTNIGAGTITCNYDGANKHKTTLGTDVFIGSNNSLVAPVDIFDGATTAAGSTITQNVPTEQLGVARARQRNIEGWKRPVKIRKD</sequence>
<proteinExistence type="inferred from homology"/>
<accession>Q48BG7</accession>
<keyword id="KW-0012">Acyltransferase</keyword>
<keyword id="KW-0133">Cell shape</keyword>
<keyword id="KW-0961">Cell wall biogenesis/degradation</keyword>
<keyword id="KW-0963">Cytoplasm</keyword>
<keyword id="KW-0460">Magnesium</keyword>
<keyword id="KW-0479">Metal-binding</keyword>
<keyword id="KW-0511">Multifunctional enzyme</keyword>
<keyword id="KW-0548">Nucleotidyltransferase</keyword>
<keyword id="KW-0573">Peptidoglycan synthesis</keyword>
<keyword id="KW-0677">Repeat</keyword>
<keyword id="KW-0808">Transferase</keyword>
<evidence type="ECO:0000255" key="1">
    <source>
        <dbReference type="HAMAP-Rule" id="MF_01631"/>
    </source>
</evidence>
<protein>
    <recommendedName>
        <fullName evidence="1">Bifunctional protein GlmU</fullName>
    </recommendedName>
    <domain>
        <recommendedName>
            <fullName evidence="1">UDP-N-acetylglucosamine pyrophosphorylase</fullName>
            <ecNumber evidence="1">2.7.7.23</ecNumber>
        </recommendedName>
        <alternativeName>
            <fullName evidence="1">N-acetylglucosamine-1-phosphate uridyltransferase</fullName>
        </alternativeName>
    </domain>
    <domain>
        <recommendedName>
            <fullName evidence="1">Glucosamine-1-phosphate N-acetyltransferase</fullName>
            <ecNumber evidence="1">2.3.1.157</ecNumber>
        </recommendedName>
    </domain>
</protein>
<gene>
    <name evidence="1" type="primary">glmU</name>
    <name type="ordered locus">PSPPH_5205</name>
</gene>
<reference key="1">
    <citation type="journal article" date="2005" name="J. Bacteriol.">
        <title>Whole-genome sequence analysis of Pseudomonas syringae pv. phaseolicola 1448A reveals divergence among pathovars in genes involved in virulence and transposition.</title>
        <authorList>
            <person name="Joardar V."/>
            <person name="Lindeberg M."/>
            <person name="Jackson R.W."/>
            <person name="Selengut J."/>
            <person name="Dodson R."/>
            <person name="Brinkac L.M."/>
            <person name="Daugherty S.C."/>
            <person name="DeBoy R.T."/>
            <person name="Durkin A.S."/>
            <person name="Gwinn Giglio M."/>
            <person name="Madupu R."/>
            <person name="Nelson W.C."/>
            <person name="Rosovitz M.J."/>
            <person name="Sullivan S.A."/>
            <person name="Crabtree J."/>
            <person name="Creasy T."/>
            <person name="Davidsen T.M."/>
            <person name="Haft D.H."/>
            <person name="Zafar N."/>
            <person name="Zhou L."/>
            <person name="Halpin R."/>
            <person name="Holley T."/>
            <person name="Khouri H.M."/>
            <person name="Feldblyum T.V."/>
            <person name="White O."/>
            <person name="Fraser C.M."/>
            <person name="Chatterjee A.K."/>
            <person name="Cartinhour S."/>
            <person name="Schneider D."/>
            <person name="Mansfield J.W."/>
            <person name="Collmer A."/>
            <person name="Buell R."/>
        </authorList>
    </citation>
    <scope>NUCLEOTIDE SEQUENCE [LARGE SCALE GENOMIC DNA]</scope>
    <source>
        <strain>1448A / Race 6</strain>
    </source>
</reference>